<comment type="function">
    <text evidence="1">Catalyzes the specific phosphorylation of the 3-hydroxyl group of shikimic acid using ATP as a cosubstrate.</text>
</comment>
<comment type="catalytic activity">
    <reaction evidence="1">
        <text>shikimate + ATP = 3-phosphoshikimate + ADP + H(+)</text>
        <dbReference type="Rhea" id="RHEA:13121"/>
        <dbReference type="ChEBI" id="CHEBI:15378"/>
        <dbReference type="ChEBI" id="CHEBI:30616"/>
        <dbReference type="ChEBI" id="CHEBI:36208"/>
        <dbReference type="ChEBI" id="CHEBI:145989"/>
        <dbReference type="ChEBI" id="CHEBI:456216"/>
        <dbReference type="EC" id="2.7.1.71"/>
    </reaction>
</comment>
<comment type="cofactor">
    <cofactor evidence="1">
        <name>Mg(2+)</name>
        <dbReference type="ChEBI" id="CHEBI:18420"/>
    </cofactor>
    <text evidence="1">Binds 1 Mg(2+) ion per subunit.</text>
</comment>
<comment type="pathway">
    <text evidence="1">Metabolic intermediate biosynthesis; chorismate biosynthesis; chorismate from D-erythrose 4-phosphate and phosphoenolpyruvate: step 5/7.</text>
</comment>
<comment type="subunit">
    <text evidence="1">Monomer.</text>
</comment>
<comment type="subcellular location">
    <subcellularLocation>
        <location evidence="1">Cytoplasm</location>
    </subcellularLocation>
</comment>
<comment type="similarity">
    <text evidence="1">Belongs to the shikimate kinase family.</text>
</comment>
<protein>
    <recommendedName>
        <fullName evidence="1">Shikimate kinase</fullName>
        <shortName evidence="1">SK</shortName>
        <ecNumber evidence="1">2.7.1.71</ecNumber>
    </recommendedName>
</protein>
<accession>P63605</accession>
<accession>Q99TV6</accession>
<keyword id="KW-0028">Amino-acid biosynthesis</keyword>
<keyword id="KW-0057">Aromatic amino acid biosynthesis</keyword>
<keyword id="KW-0067">ATP-binding</keyword>
<keyword id="KW-0963">Cytoplasm</keyword>
<keyword id="KW-0418">Kinase</keyword>
<keyword id="KW-0460">Magnesium</keyword>
<keyword id="KW-0479">Metal-binding</keyword>
<keyword id="KW-0547">Nucleotide-binding</keyword>
<keyword id="KW-0808">Transferase</keyword>
<proteinExistence type="inferred from homology"/>
<gene>
    <name evidence="1" type="primary">aroK</name>
    <name type="ordered locus">SAV1538</name>
</gene>
<evidence type="ECO:0000255" key="1">
    <source>
        <dbReference type="HAMAP-Rule" id="MF_00109"/>
    </source>
</evidence>
<dbReference type="EC" id="2.7.1.71" evidence="1"/>
<dbReference type="EMBL" id="BA000017">
    <property type="protein sequence ID" value="BAB57700.1"/>
    <property type="molecule type" value="Genomic_DNA"/>
</dbReference>
<dbReference type="RefSeq" id="WP_001015120.1">
    <property type="nucleotide sequence ID" value="NC_002758.2"/>
</dbReference>
<dbReference type="SMR" id="P63605"/>
<dbReference type="KEGG" id="sav:SAV1538"/>
<dbReference type="HOGENOM" id="CLU_057607_4_3_9"/>
<dbReference type="PhylomeDB" id="P63605"/>
<dbReference type="UniPathway" id="UPA00053">
    <property type="reaction ID" value="UER00088"/>
</dbReference>
<dbReference type="Proteomes" id="UP000002481">
    <property type="component" value="Chromosome"/>
</dbReference>
<dbReference type="GO" id="GO:0005829">
    <property type="term" value="C:cytosol"/>
    <property type="evidence" value="ECO:0007669"/>
    <property type="project" value="TreeGrafter"/>
</dbReference>
<dbReference type="GO" id="GO:0005524">
    <property type="term" value="F:ATP binding"/>
    <property type="evidence" value="ECO:0007669"/>
    <property type="project" value="UniProtKB-UniRule"/>
</dbReference>
<dbReference type="GO" id="GO:0000287">
    <property type="term" value="F:magnesium ion binding"/>
    <property type="evidence" value="ECO:0007669"/>
    <property type="project" value="UniProtKB-UniRule"/>
</dbReference>
<dbReference type="GO" id="GO:0004765">
    <property type="term" value="F:shikimate kinase activity"/>
    <property type="evidence" value="ECO:0007669"/>
    <property type="project" value="UniProtKB-UniRule"/>
</dbReference>
<dbReference type="GO" id="GO:0008652">
    <property type="term" value="P:amino acid biosynthetic process"/>
    <property type="evidence" value="ECO:0007669"/>
    <property type="project" value="UniProtKB-KW"/>
</dbReference>
<dbReference type="GO" id="GO:0009073">
    <property type="term" value="P:aromatic amino acid family biosynthetic process"/>
    <property type="evidence" value="ECO:0007669"/>
    <property type="project" value="UniProtKB-KW"/>
</dbReference>
<dbReference type="GO" id="GO:0009423">
    <property type="term" value="P:chorismate biosynthetic process"/>
    <property type="evidence" value="ECO:0007669"/>
    <property type="project" value="UniProtKB-UniRule"/>
</dbReference>
<dbReference type="CDD" id="cd00464">
    <property type="entry name" value="SK"/>
    <property type="match status" value="1"/>
</dbReference>
<dbReference type="FunFam" id="3.40.50.300:FF:001734">
    <property type="entry name" value="Shikimate kinase"/>
    <property type="match status" value="1"/>
</dbReference>
<dbReference type="Gene3D" id="3.40.50.300">
    <property type="entry name" value="P-loop containing nucleotide triphosphate hydrolases"/>
    <property type="match status" value="1"/>
</dbReference>
<dbReference type="HAMAP" id="MF_00109">
    <property type="entry name" value="Shikimate_kinase"/>
    <property type="match status" value="1"/>
</dbReference>
<dbReference type="InterPro" id="IPR027417">
    <property type="entry name" value="P-loop_NTPase"/>
</dbReference>
<dbReference type="InterPro" id="IPR031322">
    <property type="entry name" value="Shikimate/glucono_kinase"/>
</dbReference>
<dbReference type="InterPro" id="IPR000623">
    <property type="entry name" value="Shikimate_kinase/TSH1"/>
</dbReference>
<dbReference type="InterPro" id="IPR023000">
    <property type="entry name" value="Shikimate_kinase_CS"/>
</dbReference>
<dbReference type="PANTHER" id="PTHR21087">
    <property type="entry name" value="SHIKIMATE KINASE"/>
    <property type="match status" value="1"/>
</dbReference>
<dbReference type="PANTHER" id="PTHR21087:SF16">
    <property type="entry name" value="SHIKIMATE KINASE 1, CHLOROPLASTIC"/>
    <property type="match status" value="1"/>
</dbReference>
<dbReference type="Pfam" id="PF01202">
    <property type="entry name" value="SKI"/>
    <property type="match status" value="1"/>
</dbReference>
<dbReference type="PRINTS" id="PR01100">
    <property type="entry name" value="SHIKIMTKNASE"/>
</dbReference>
<dbReference type="SUPFAM" id="SSF52540">
    <property type="entry name" value="P-loop containing nucleoside triphosphate hydrolases"/>
    <property type="match status" value="1"/>
</dbReference>
<dbReference type="PROSITE" id="PS01128">
    <property type="entry name" value="SHIKIMATE_KINASE"/>
    <property type="match status" value="1"/>
</dbReference>
<sequence>MNHDKSPIILIGFMGTGKSTIGKYVADEQNLSFIDIDSYIEEKYKLTIPEIFSKHGEQYFRNLEFTCLQECINTADIIATGGGIIESEEAFNFLKNQKNIIWLDCNIDIIYSRINDDPHRPNANNKTIKQLNDLYCSRILRYNEIAFKKFDSHLLSISEIYYELLNLIKASDQY</sequence>
<name>AROK_STAAM</name>
<feature type="chain" id="PRO_0000192411" description="Shikimate kinase">
    <location>
        <begin position="1"/>
        <end position="174"/>
    </location>
</feature>
<feature type="binding site" evidence="1">
    <location>
        <begin position="15"/>
        <end position="20"/>
    </location>
    <ligand>
        <name>ATP</name>
        <dbReference type="ChEBI" id="CHEBI:30616"/>
    </ligand>
</feature>
<feature type="binding site" evidence="1">
    <location>
        <position position="19"/>
    </location>
    <ligand>
        <name>Mg(2+)</name>
        <dbReference type="ChEBI" id="CHEBI:18420"/>
    </ligand>
</feature>
<feature type="binding site" evidence="1">
    <location>
        <position position="37"/>
    </location>
    <ligand>
        <name>substrate</name>
    </ligand>
</feature>
<feature type="binding site" evidence="1">
    <location>
        <position position="61"/>
    </location>
    <ligand>
        <name>substrate</name>
    </ligand>
</feature>
<feature type="binding site" evidence="1">
    <location>
        <position position="82"/>
    </location>
    <ligand>
        <name>substrate</name>
    </ligand>
</feature>
<feature type="binding site" evidence="1">
    <location>
        <position position="120"/>
    </location>
    <ligand>
        <name>ATP</name>
        <dbReference type="ChEBI" id="CHEBI:30616"/>
    </ligand>
</feature>
<feature type="binding site" evidence="1">
    <location>
        <position position="138"/>
    </location>
    <ligand>
        <name>substrate</name>
    </ligand>
</feature>
<organism>
    <name type="scientific">Staphylococcus aureus (strain Mu50 / ATCC 700699)</name>
    <dbReference type="NCBI Taxonomy" id="158878"/>
    <lineage>
        <taxon>Bacteria</taxon>
        <taxon>Bacillati</taxon>
        <taxon>Bacillota</taxon>
        <taxon>Bacilli</taxon>
        <taxon>Bacillales</taxon>
        <taxon>Staphylococcaceae</taxon>
        <taxon>Staphylococcus</taxon>
    </lineage>
</organism>
<reference key="1">
    <citation type="journal article" date="2001" name="Lancet">
        <title>Whole genome sequencing of meticillin-resistant Staphylococcus aureus.</title>
        <authorList>
            <person name="Kuroda M."/>
            <person name="Ohta T."/>
            <person name="Uchiyama I."/>
            <person name="Baba T."/>
            <person name="Yuzawa H."/>
            <person name="Kobayashi I."/>
            <person name="Cui L."/>
            <person name="Oguchi A."/>
            <person name="Aoki K."/>
            <person name="Nagai Y."/>
            <person name="Lian J.-Q."/>
            <person name="Ito T."/>
            <person name="Kanamori M."/>
            <person name="Matsumaru H."/>
            <person name="Maruyama A."/>
            <person name="Murakami H."/>
            <person name="Hosoyama A."/>
            <person name="Mizutani-Ui Y."/>
            <person name="Takahashi N.K."/>
            <person name="Sawano T."/>
            <person name="Inoue R."/>
            <person name="Kaito C."/>
            <person name="Sekimizu K."/>
            <person name="Hirakawa H."/>
            <person name="Kuhara S."/>
            <person name="Goto S."/>
            <person name="Yabuzaki J."/>
            <person name="Kanehisa M."/>
            <person name="Yamashita A."/>
            <person name="Oshima K."/>
            <person name="Furuya K."/>
            <person name="Yoshino C."/>
            <person name="Shiba T."/>
            <person name="Hattori M."/>
            <person name="Ogasawara N."/>
            <person name="Hayashi H."/>
            <person name="Hiramatsu K."/>
        </authorList>
    </citation>
    <scope>NUCLEOTIDE SEQUENCE [LARGE SCALE GENOMIC DNA]</scope>
    <source>
        <strain>Mu50 / ATCC 700699</strain>
    </source>
</reference>